<organism>
    <name type="scientific">Escherichia coli O127:H6 (strain E2348/69 / EPEC)</name>
    <dbReference type="NCBI Taxonomy" id="574521"/>
    <lineage>
        <taxon>Bacteria</taxon>
        <taxon>Pseudomonadati</taxon>
        <taxon>Pseudomonadota</taxon>
        <taxon>Gammaproteobacteria</taxon>
        <taxon>Enterobacterales</taxon>
        <taxon>Enterobacteriaceae</taxon>
        <taxon>Escherichia</taxon>
    </lineage>
</organism>
<keyword id="KW-0028">Amino-acid biosynthesis</keyword>
<keyword id="KW-0997">Cell inner membrane</keyword>
<keyword id="KW-1003">Cell membrane</keyword>
<keyword id="KW-0198">Cysteine biosynthesis</keyword>
<keyword id="KW-0472">Membrane</keyword>
<keyword id="KW-1185">Reference proteome</keyword>
<keyword id="KW-0764">Sulfate transport</keyword>
<keyword id="KW-0812">Transmembrane</keyword>
<keyword id="KW-1133">Transmembrane helix</keyword>
<keyword id="KW-0813">Transport</keyword>
<protein>
    <recommendedName>
        <fullName evidence="1">Sulfate transporter CysZ</fullName>
    </recommendedName>
</protein>
<dbReference type="EMBL" id="FM180568">
    <property type="protein sequence ID" value="CAS10147.1"/>
    <property type="molecule type" value="Genomic_DNA"/>
</dbReference>
<dbReference type="RefSeq" id="WP_000254839.1">
    <property type="nucleotide sequence ID" value="NC_011601.1"/>
</dbReference>
<dbReference type="SMR" id="B7UGB4"/>
<dbReference type="GeneID" id="93774718"/>
<dbReference type="KEGG" id="ecg:E2348C_2599"/>
<dbReference type="HOGENOM" id="CLU_070331_1_0_6"/>
<dbReference type="Proteomes" id="UP000008205">
    <property type="component" value="Chromosome"/>
</dbReference>
<dbReference type="GO" id="GO:0005886">
    <property type="term" value="C:plasma membrane"/>
    <property type="evidence" value="ECO:0007669"/>
    <property type="project" value="UniProtKB-SubCell"/>
</dbReference>
<dbReference type="GO" id="GO:0009675">
    <property type="term" value="F:high-affinity sulfate:proton symporter activity"/>
    <property type="evidence" value="ECO:0007669"/>
    <property type="project" value="TreeGrafter"/>
</dbReference>
<dbReference type="GO" id="GO:0019344">
    <property type="term" value="P:cysteine biosynthetic process"/>
    <property type="evidence" value="ECO:0007669"/>
    <property type="project" value="UniProtKB-UniRule"/>
</dbReference>
<dbReference type="GO" id="GO:0000103">
    <property type="term" value="P:sulfate assimilation"/>
    <property type="evidence" value="ECO:0007669"/>
    <property type="project" value="InterPro"/>
</dbReference>
<dbReference type="HAMAP" id="MF_00468">
    <property type="entry name" value="CysZ"/>
    <property type="match status" value="1"/>
</dbReference>
<dbReference type="InterPro" id="IPR050480">
    <property type="entry name" value="CysZ_sulfate_transptr"/>
</dbReference>
<dbReference type="InterPro" id="IPR022985">
    <property type="entry name" value="Sulfate_CysZ"/>
</dbReference>
<dbReference type="NCBIfam" id="NF003433">
    <property type="entry name" value="PRK04949.1"/>
    <property type="match status" value="1"/>
</dbReference>
<dbReference type="PANTHER" id="PTHR37468">
    <property type="entry name" value="SULFATE TRANSPORTER CYSZ"/>
    <property type="match status" value="1"/>
</dbReference>
<dbReference type="PANTHER" id="PTHR37468:SF1">
    <property type="entry name" value="SULFATE TRANSPORTER CYSZ"/>
    <property type="match status" value="1"/>
</dbReference>
<dbReference type="Pfam" id="PF07264">
    <property type="entry name" value="EI24"/>
    <property type="match status" value="1"/>
</dbReference>
<feature type="chain" id="PRO_1000135452" description="Sulfate transporter CysZ">
    <location>
        <begin position="1"/>
        <end position="253"/>
    </location>
</feature>
<feature type="transmembrane region" description="Helical" evidence="1">
    <location>
        <begin position="31"/>
        <end position="51"/>
    </location>
</feature>
<feature type="transmembrane region" description="Helical" evidence="1">
    <location>
        <begin position="75"/>
        <end position="95"/>
    </location>
</feature>
<feature type="transmembrane region" description="Helical" evidence="1">
    <location>
        <begin position="151"/>
        <end position="171"/>
    </location>
</feature>
<feature type="transmembrane region" description="Helical" evidence="1">
    <location>
        <begin position="222"/>
        <end position="242"/>
    </location>
</feature>
<sequence>MVSSFTSAPRSGFYYFAQGWKLVSQPGIRRFVILPLLVNILLMGGAFWWLFTQLDVWIPTLMSYVPDWLQWLSYLLWPLAVISVLLVFGYFFSTIANWIAAPFNGLLAEQLEARLTGATPPDTGIFGIMKDVPRIMKREWQKFAWYLPRAIVLLILYFIPGIGQTVAPVLWFLFSAWMLAIQYCDYPFDNHKVPFKEMRTALRTRKITNMQFGALTSLFTMIPLLNLFIMPVAVCGATAMWVDCYRDKHAMWR</sequence>
<reference key="1">
    <citation type="journal article" date="2009" name="J. Bacteriol.">
        <title>Complete genome sequence and comparative genome analysis of enteropathogenic Escherichia coli O127:H6 strain E2348/69.</title>
        <authorList>
            <person name="Iguchi A."/>
            <person name="Thomson N.R."/>
            <person name="Ogura Y."/>
            <person name="Saunders D."/>
            <person name="Ooka T."/>
            <person name="Henderson I.R."/>
            <person name="Harris D."/>
            <person name="Asadulghani M."/>
            <person name="Kurokawa K."/>
            <person name="Dean P."/>
            <person name="Kenny B."/>
            <person name="Quail M.A."/>
            <person name="Thurston S."/>
            <person name="Dougan G."/>
            <person name="Hayashi T."/>
            <person name="Parkhill J."/>
            <person name="Frankel G."/>
        </authorList>
    </citation>
    <scope>NUCLEOTIDE SEQUENCE [LARGE SCALE GENOMIC DNA]</scope>
    <source>
        <strain>E2348/69 / EPEC</strain>
    </source>
</reference>
<accession>B7UGB4</accession>
<gene>
    <name evidence="1" type="primary">cysZ</name>
    <name type="ordered locus">E2348C_2599</name>
</gene>
<proteinExistence type="inferred from homology"/>
<name>CYSZ_ECO27</name>
<evidence type="ECO:0000255" key="1">
    <source>
        <dbReference type="HAMAP-Rule" id="MF_00468"/>
    </source>
</evidence>
<comment type="function">
    <text evidence="1">High affinity, high specificity proton-dependent sulfate transporter, which mediates sulfate uptake. Provides the sulfur source for the cysteine synthesis pathway.</text>
</comment>
<comment type="subcellular location">
    <subcellularLocation>
        <location evidence="1">Cell inner membrane</location>
        <topology evidence="1">Multi-pass membrane protein</topology>
    </subcellularLocation>
</comment>
<comment type="similarity">
    <text evidence="1">Belongs to the CysZ family.</text>
</comment>